<protein>
    <recommendedName>
        <fullName>Ribonuclease HIII</fullName>
        <shortName>RNase HIII</shortName>
        <ecNumber>3.1.26.4</ecNumber>
    </recommendedName>
</protein>
<dbReference type="EC" id="3.1.26.4"/>
<dbReference type="EMBL" id="AE002160">
    <property type="protein sequence ID" value="AAF39144.1"/>
    <property type="molecule type" value="Genomic_DNA"/>
</dbReference>
<dbReference type="PIR" id="D81720">
    <property type="entry name" value="D81720"/>
</dbReference>
<dbReference type="SMR" id="Q9PL32"/>
<dbReference type="KEGG" id="cmu:TC_0276"/>
<dbReference type="eggNOG" id="COG1039">
    <property type="taxonomic scope" value="Bacteria"/>
</dbReference>
<dbReference type="HOGENOM" id="CLU_059546_0_0_0"/>
<dbReference type="Proteomes" id="UP000000800">
    <property type="component" value="Chromosome"/>
</dbReference>
<dbReference type="GO" id="GO:0005737">
    <property type="term" value="C:cytoplasm"/>
    <property type="evidence" value="ECO:0007669"/>
    <property type="project" value="UniProtKB-SubCell"/>
</dbReference>
<dbReference type="GO" id="GO:0032299">
    <property type="term" value="C:ribonuclease H2 complex"/>
    <property type="evidence" value="ECO:0007669"/>
    <property type="project" value="TreeGrafter"/>
</dbReference>
<dbReference type="GO" id="GO:0000287">
    <property type="term" value="F:magnesium ion binding"/>
    <property type="evidence" value="ECO:0007669"/>
    <property type="project" value="UniProtKB-UniRule"/>
</dbReference>
<dbReference type="GO" id="GO:0003723">
    <property type="term" value="F:RNA binding"/>
    <property type="evidence" value="ECO:0007669"/>
    <property type="project" value="InterPro"/>
</dbReference>
<dbReference type="GO" id="GO:0004523">
    <property type="term" value="F:RNA-DNA hybrid ribonuclease activity"/>
    <property type="evidence" value="ECO:0007669"/>
    <property type="project" value="UniProtKB-UniRule"/>
</dbReference>
<dbReference type="GO" id="GO:0043137">
    <property type="term" value="P:DNA replication, removal of RNA primer"/>
    <property type="evidence" value="ECO:0007669"/>
    <property type="project" value="TreeGrafter"/>
</dbReference>
<dbReference type="GO" id="GO:0006298">
    <property type="term" value="P:mismatch repair"/>
    <property type="evidence" value="ECO:0007669"/>
    <property type="project" value="TreeGrafter"/>
</dbReference>
<dbReference type="CDD" id="cd06590">
    <property type="entry name" value="RNase_HII_bacteria_HIII_like"/>
    <property type="match status" value="1"/>
</dbReference>
<dbReference type="CDD" id="cd14796">
    <property type="entry name" value="RNAse_HIII_N"/>
    <property type="match status" value="1"/>
</dbReference>
<dbReference type="Gene3D" id="3.30.420.10">
    <property type="entry name" value="Ribonuclease H-like superfamily/Ribonuclease H"/>
    <property type="match status" value="1"/>
</dbReference>
<dbReference type="Gene3D" id="3.30.310.10">
    <property type="entry name" value="TATA-Binding Protein"/>
    <property type="match status" value="1"/>
</dbReference>
<dbReference type="HAMAP" id="MF_00053">
    <property type="entry name" value="RNase_HIII"/>
    <property type="match status" value="1"/>
</dbReference>
<dbReference type="InterPro" id="IPR001352">
    <property type="entry name" value="RNase_HII/HIII"/>
</dbReference>
<dbReference type="InterPro" id="IPR024567">
    <property type="entry name" value="RNase_HII/HIII_dom"/>
</dbReference>
<dbReference type="InterPro" id="IPR004641">
    <property type="entry name" value="RNase_HIII"/>
</dbReference>
<dbReference type="InterPro" id="IPR024568">
    <property type="entry name" value="RNase_HIII_N"/>
</dbReference>
<dbReference type="InterPro" id="IPR012337">
    <property type="entry name" value="RNaseH-like_sf"/>
</dbReference>
<dbReference type="InterPro" id="IPR036397">
    <property type="entry name" value="RNaseH_sf"/>
</dbReference>
<dbReference type="InterPro" id="IPR012295">
    <property type="entry name" value="TBP_dom_sf"/>
</dbReference>
<dbReference type="NCBIfam" id="TIGR00716">
    <property type="entry name" value="rnhC"/>
    <property type="match status" value="1"/>
</dbReference>
<dbReference type="PANTHER" id="PTHR10954:SF23">
    <property type="entry name" value="RIBONUCLEASE"/>
    <property type="match status" value="1"/>
</dbReference>
<dbReference type="PANTHER" id="PTHR10954">
    <property type="entry name" value="RIBONUCLEASE H2 SUBUNIT A"/>
    <property type="match status" value="1"/>
</dbReference>
<dbReference type="Pfam" id="PF11858">
    <property type="entry name" value="DUF3378"/>
    <property type="match status" value="1"/>
</dbReference>
<dbReference type="Pfam" id="PF01351">
    <property type="entry name" value="RNase_HII"/>
    <property type="match status" value="1"/>
</dbReference>
<dbReference type="PIRSF" id="PIRSF037748">
    <property type="entry name" value="RnhC"/>
    <property type="match status" value="1"/>
</dbReference>
<dbReference type="SUPFAM" id="SSF53098">
    <property type="entry name" value="Ribonuclease H-like"/>
    <property type="match status" value="1"/>
</dbReference>
<dbReference type="PROSITE" id="PS51975">
    <property type="entry name" value="RNASE_H_2"/>
    <property type="match status" value="1"/>
</dbReference>
<reference key="1">
    <citation type="journal article" date="2000" name="Nucleic Acids Res.">
        <title>Genome sequences of Chlamydia trachomatis MoPn and Chlamydia pneumoniae AR39.</title>
        <authorList>
            <person name="Read T.D."/>
            <person name="Brunham R.C."/>
            <person name="Shen C."/>
            <person name="Gill S.R."/>
            <person name="Heidelberg J.F."/>
            <person name="White O."/>
            <person name="Hickey E.K."/>
            <person name="Peterson J.D."/>
            <person name="Utterback T.R."/>
            <person name="Berry K.J."/>
            <person name="Bass S."/>
            <person name="Linher K.D."/>
            <person name="Weidman J.F."/>
            <person name="Khouri H.M."/>
            <person name="Craven B."/>
            <person name="Bowman C."/>
            <person name="Dodson R.J."/>
            <person name="Gwinn M.L."/>
            <person name="Nelson W.C."/>
            <person name="DeBoy R.T."/>
            <person name="Kolonay J.F."/>
            <person name="McClarty G."/>
            <person name="Salzberg S.L."/>
            <person name="Eisen J.A."/>
            <person name="Fraser C.M."/>
        </authorList>
    </citation>
    <scope>NUCLEOTIDE SEQUENCE [LARGE SCALE GENOMIC DNA]</scope>
    <source>
        <strain>MoPn / Nigg</strain>
    </source>
</reference>
<gene>
    <name type="primary">rnhC</name>
    <name type="ordered locus">TC_0276</name>
</gene>
<proteinExistence type="inferred from homology"/>
<accession>Q9PL32</accession>
<comment type="function">
    <text evidence="1">Endonuclease that specifically degrades the RNA of RNA-DNA hybrids.</text>
</comment>
<comment type="catalytic activity">
    <reaction>
        <text>Endonucleolytic cleavage to 5'-phosphomonoester.</text>
        <dbReference type="EC" id="3.1.26.4"/>
    </reaction>
</comment>
<comment type="cofactor">
    <cofactor evidence="1">
        <name>Mn(2+)</name>
        <dbReference type="ChEBI" id="CHEBI:29035"/>
    </cofactor>
    <cofactor evidence="1">
        <name>Mg(2+)</name>
        <dbReference type="ChEBI" id="CHEBI:18420"/>
    </cofactor>
    <text evidence="1">Manganese or magnesium. Binds 1 divalent metal ion per monomer in the absence of substrate. May bind a second metal ion after substrate binding.</text>
</comment>
<comment type="subcellular location">
    <subcellularLocation>
        <location evidence="3">Cytoplasm</location>
    </subcellularLocation>
</comment>
<comment type="similarity">
    <text evidence="3">Belongs to the RNase HII family. RnhC subfamily.</text>
</comment>
<sequence length="301" mass="33425">MIMPTPFVSQLSPSLFTTLREQLEKKGFVISIPPHTVFQGRSSTVSCTVYQSGKIVVQGKGTQEFVEFFLEPEILHSFSIQNVQQDLRPRIGVDESGKGDFFGPLCTAGVYAPSIKSIESLYEITICDSKLISDAKIPSLARSIRSLCTCKVITLFPEKYNALYANFQNLNALLAWTHATIIDDLAPKPTGDVFAISDQFASSERVLLQAVRKKRADIELIQRHRAEQDVVVAAASILARDAFLSSMQTLESQYQVRLLKGASGKVKQQAKEILRDKGQPVLEKVCKTHFKTFYEVLGSTS</sequence>
<evidence type="ECO:0000250" key="1"/>
<evidence type="ECO:0000255" key="2">
    <source>
        <dbReference type="PROSITE-ProRule" id="PRU01319"/>
    </source>
</evidence>
<evidence type="ECO:0000305" key="3"/>
<organism>
    <name type="scientific">Chlamydia muridarum (strain MoPn / Nigg)</name>
    <dbReference type="NCBI Taxonomy" id="243161"/>
    <lineage>
        <taxon>Bacteria</taxon>
        <taxon>Pseudomonadati</taxon>
        <taxon>Chlamydiota</taxon>
        <taxon>Chlamydiia</taxon>
        <taxon>Chlamydiales</taxon>
        <taxon>Chlamydiaceae</taxon>
        <taxon>Chlamydia/Chlamydophila group</taxon>
        <taxon>Chlamydia</taxon>
    </lineage>
</organism>
<feature type="chain" id="PRO_0000111683" description="Ribonuclease HIII">
    <location>
        <begin position="1"/>
        <end position="301"/>
    </location>
</feature>
<feature type="domain" description="RNase H type-2" evidence="2">
    <location>
        <begin position="88"/>
        <end position="301"/>
    </location>
</feature>
<feature type="binding site" evidence="1">
    <location>
        <position position="94"/>
    </location>
    <ligand>
        <name>a divalent metal cation</name>
        <dbReference type="ChEBI" id="CHEBI:60240"/>
    </ligand>
</feature>
<feature type="binding site" evidence="1">
    <location>
        <position position="95"/>
    </location>
    <ligand>
        <name>a divalent metal cation</name>
        <dbReference type="ChEBI" id="CHEBI:60240"/>
    </ligand>
</feature>
<feature type="binding site" evidence="1">
    <location>
        <position position="198"/>
    </location>
    <ligand>
        <name>a divalent metal cation</name>
        <dbReference type="ChEBI" id="CHEBI:60240"/>
    </ligand>
</feature>
<keyword id="KW-0963">Cytoplasm</keyword>
<keyword id="KW-0255">Endonuclease</keyword>
<keyword id="KW-0378">Hydrolase</keyword>
<keyword id="KW-0460">Magnesium</keyword>
<keyword id="KW-0479">Metal-binding</keyword>
<keyword id="KW-0540">Nuclease</keyword>
<name>RNH3_CHLMU</name>